<sequence length="138" mass="15772">MALLPDKEKLLRNFLRCANWEEKYLYIIELGQRLPELRDEDKSPQNSIQGCQSQVWIVMRQNAQGIIELQGDSDAAIVKGLIAVVFILYDQMTPQDIVNFDVRPWFEKMALTQHLTPSRSQGLEAMIRAIRAKAAALS</sequence>
<proteinExistence type="inferred from homology"/>
<feature type="chain" id="PRO_0000202126" description="Cysteine desulfuration protein SufE">
    <location>
        <begin position="1"/>
        <end position="138"/>
    </location>
</feature>
<feature type="active site" description="Cysteine persulfide intermediate" evidence="1">
    <location>
        <position position="51"/>
    </location>
</feature>
<gene>
    <name evidence="1" type="primary">sufE</name>
    <name type="ordered locus">c2074</name>
</gene>
<dbReference type="EMBL" id="AE014075">
    <property type="protein sequence ID" value="AAN80534.1"/>
    <property type="molecule type" value="Genomic_DNA"/>
</dbReference>
<dbReference type="RefSeq" id="WP_001196522.1">
    <property type="nucleotide sequence ID" value="NZ_CP051263.1"/>
</dbReference>
<dbReference type="SMR" id="Q8FH55"/>
<dbReference type="STRING" id="199310.c2074"/>
<dbReference type="KEGG" id="ecc:c2074"/>
<dbReference type="eggNOG" id="COG2166">
    <property type="taxonomic scope" value="Bacteria"/>
</dbReference>
<dbReference type="HOGENOM" id="CLU_124502_1_1_6"/>
<dbReference type="BioCyc" id="ECOL199310:C2074-MONOMER"/>
<dbReference type="UniPathway" id="UPA00266"/>
<dbReference type="Proteomes" id="UP000001410">
    <property type="component" value="Chromosome"/>
</dbReference>
<dbReference type="GO" id="GO:0005737">
    <property type="term" value="C:cytoplasm"/>
    <property type="evidence" value="ECO:0007669"/>
    <property type="project" value="UniProtKB-SubCell"/>
</dbReference>
<dbReference type="GO" id="GO:0016226">
    <property type="term" value="P:iron-sulfur cluster assembly"/>
    <property type="evidence" value="ECO:0007669"/>
    <property type="project" value="InterPro"/>
</dbReference>
<dbReference type="GO" id="GO:0006790">
    <property type="term" value="P:sulfur compound metabolic process"/>
    <property type="evidence" value="ECO:0007669"/>
    <property type="project" value="InterPro"/>
</dbReference>
<dbReference type="FunFam" id="3.90.1010.10:FF:000004">
    <property type="entry name" value="Cysteine desulfuration protein SufE"/>
    <property type="match status" value="1"/>
</dbReference>
<dbReference type="Gene3D" id="3.90.1010.10">
    <property type="match status" value="1"/>
</dbReference>
<dbReference type="HAMAP" id="MF_01832">
    <property type="entry name" value="SufE"/>
    <property type="match status" value="1"/>
</dbReference>
<dbReference type="InterPro" id="IPR023939">
    <property type="entry name" value="Cysteine_desulfuration_SufE"/>
</dbReference>
<dbReference type="InterPro" id="IPR003808">
    <property type="entry name" value="Fe-S_metab-assoc_dom"/>
</dbReference>
<dbReference type="NCBIfam" id="NF006792">
    <property type="entry name" value="PRK09296.1"/>
    <property type="match status" value="1"/>
</dbReference>
<dbReference type="PANTHER" id="PTHR43597:SF3">
    <property type="entry name" value="CYSTEINE DESULFURATION PROTEIN SUFE"/>
    <property type="match status" value="1"/>
</dbReference>
<dbReference type="PANTHER" id="PTHR43597">
    <property type="entry name" value="SULFUR ACCEPTOR PROTEIN CSDE"/>
    <property type="match status" value="1"/>
</dbReference>
<dbReference type="Pfam" id="PF02657">
    <property type="entry name" value="SufE"/>
    <property type="match status" value="1"/>
</dbReference>
<dbReference type="SUPFAM" id="SSF82649">
    <property type="entry name" value="SufE/NifU"/>
    <property type="match status" value="1"/>
</dbReference>
<name>SUFE_ECOL6</name>
<comment type="function">
    <text evidence="1">Participates in cysteine desulfuration mediated by SufS. Cysteine desulfuration mobilizes sulfur from L-cysteine to yield L-alanine and constitutes an essential step in sulfur metabolism for biosynthesis of a variety of sulfur-containing biomolecules. Functions as a sulfur acceptor for SufS, by mediating the direct transfer of the sulfur atom from the S-sulfanylcysteine of SufS, an intermediate product of cysteine desulfuration process.</text>
</comment>
<comment type="pathway">
    <text evidence="1">Cofactor biosynthesis; iron-sulfur cluster biosynthesis.</text>
</comment>
<comment type="subunit">
    <text evidence="1">Homodimer. Interacts with SufS.</text>
</comment>
<comment type="subcellular location">
    <subcellularLocation>
        <location evidence="1">Cytoplasm</location>
    </subcellularLocation>
</comment>
<comment type="similarity">
    <text evidence="1">Belongs to the SufE family.</text>
</comment>
<keyword id="KW-0963">Cytoplasm</keyword>
<keyword id="KW-1185">Reference proteome</keyword>
<accession>Q8FH55</accession>
<reference key="1">
    <citation type="journal article" date="2002" name="Proc. Natl. Acad. Sci. U.S.A.">
        <title>Extensive mosaic structure revealed by the complete genome sequence of uropathogenic Escherichia coli.</title>
        <authorList>
            <person name="Welch R.A."/>
            <person name="Burland V."/>
            <person name="Plunkett G. III"/>
            <person name="Redford P."/>
            <person name="Roesch P."/>
            <person name="Rasko D."/>
            <person name="Buckles E.L."/>
            <person name="Liou S.-R."/>
            <person name="Boutin A."/>
            <person name="Hackett J."/>
            <person name="Stroud D."/>
            <person name="Mayhew G.F."/>
            <person name="Rose D.J."/>
            <person name="Zhou S."/>
            <person name="Schwartz D.C."/>
            <person name="Perna N.T."/>
            <person name="Mobley H.L.T."/>
            <person name="Donnenberg M.S."/>
            <person name="Blattner F.R."/>
        </authorList>
    </citation>
    <scope>NUCLEOTIDE SEQUENCE [LARGE SCALE GENOMIC DNA]</scope>
    <source>
        <strain>CFT073 / ATCC 700928 / UPEC</strain>
    </source>
</reference>
<protein>
    <recommendedName>
        <fullName evidence="1">Cysteine desulfuration protein SufE</fullName>
    </recommendedName>
</protein>
<organism>
    <name type="scientific">Escherichia coli O6:H1 (strain CFT073 / ATCC 700928 / UPEC)</name>
    <dbReference type="NCBI Taxonomy" id="199310"/>
    <lineage>
        <taxon>Bacteria</taxon>
        <taxon>Pseudomonadati</taxon>
        <taxon>Pseudomonadota</taxon>
        <taxon>Gammaproteobacteria</taxon>
        <taxon>Enterobacterales</taxon>
        <taxon>Enterobacteriaceae</taxon>
        <taxon>Escherichia</taxon>
    </lineage>
</organism>
<evidence type="ECO:0000255" key="1">
    <source>
        <dbReference type="HAMAP-Rule" id="MF_01832"/>
    </source>
</evidence>